<keyword id="KW-0143">Chaperone</keyword>
<keyword id="KW-0963">Cytoplasm</keyword>
<proteinExistence type="inferred from homology"/>
<comment type="function">
    <text evidence="1">Together with the chaperonin GroEL, plays an essential role in assisting protein folding. The GroEL-GroES system forms a nano-cage that allows encapsulation of the non-native substrate proteins and provides a physical environment optimized to promote and accelerate protein folding. GroES binds to the apical surface of the GroEL ring, thereby capping the opening of the GroEL channel.</text>
</comment>
<comment type="subunit">
    <text evidence="1">Heptamer of 7 subunits arranged in a ring. Interacts with the chaperonin GroEL.</text>
</comment>
<comment type="subcellular location">
    <subcellularLocation>
        <location evidence="1">Cytoplasm</location>
    </subcellularLocation>
</comment>
<comment type="similarity">
    <text evidence="1">Belongs to the GroES chaperonin family.</text>
</comment>
<sequence>MNLKPLNDRVLVKRLESEEKTAGGLYIPDTAKEKPSRGEVVAAGPGKTADDGKLVAMTVKAGDMVLFNKYAGTEIKIDGVEHLVMREDDILAIIE</sequence>
<protein>
    <recommendedName>
        <fullName evidence="1">Co-chaperonin GroES</fullName>
    </recommendedName>
    <alternativeName>
        <fullName evidence="1">10 kDa chaperonin</fullName>
    </alternativeName>
    <alternativeName>
        <fullName evidence="1">Chaperonin-10</fullName>
        <shortName evidence="1">Cpn10</shortName>
    </alternativeName>
</protein>
<feature type="chain" id="PRO_1000025251" description="Co-chaperonin GroES">
    <location>
        <begin position="1"/>
        <end position="95"/>
    </location>
</feature>
<name>CH10_NITV4</name>
<gene>
    <name evidence="1" type="primary">groES</name>
    <name evidence="1" type="synonym">groS</name>
    <name type="ordered locus">Dvul_1195</name>
</gene>
<reference key="1">
    <citation type="journal article" date="2009" name="Environ. Microbiol.">
        <title>Contribution of mobile genetic elements to Desulfovibrio vulgaris genome plasticity.</title>
        <authorList>
            <person name="Walker C.B."/>
            <person name="Stolyar S."/>
            <person name="Chivian D."/>
            <person name="Pinel N."/>
            <person name="Gabster J.A."/>
            <person name="Dehal P.S."/>
            <person name="He Z."/>
            <person name="Yang Z.K."/>
            <person name="Yen H.C."/>
            <person name="Zhou J."/>
            <person name="Wall J.D."/>
            <person name="Hazen T.C."/>
            <person name="Arkin A.P."/>
            <person name="Stahl D.A."/>
        </authorList>
    </citation>
    <scope>NUCLEOTIDE SEQUENCE [LARGE SCALE GENOMIC DNA]</scope>
    <source>
        <strain>DP4</strain>
    </source>
</reference>
<evidence type="ECO:0000255" key="1">
    <source>
        <dbReference type="HAMAP-Rule" id="MF_00580"/>
    </source>
</evidence>
<accession>A1VCP9</accession>
<dbReference type="EMBL" id="CP000527">
    <property type="protein sequence ID" value="ABM28215.1"/>
    <property type="molecule type" value="Genomic_DNA"/>
</dbReference>
<dbReference type="RefSeq" id="WP_010939263.1">
    <property type="nucleotide sequence ID" value="NC_008751.1"/>
</dbReference>
<dbReference type="SMR" id="A1VCP9"/>
<dbReference type="KEGG" id="dvl:Dvul_1195"/>
<dbReference type="HOGENOM" id="CLU_132825_2_0_7"/>
<dbReference type="Proteomes" id="UP000009173">
    <property type="component" value="Chromosome"/>
</dbReference>
<dbReference type="GO" id="GO:0005737">
    <property type="term" value="C:cytoplasm"/>
    <property type="evidence" value="ECO:0007669"/>
    <property type="project" value="UniProtKB-SubCell"/>
</dbReference>
<dbReference type="GO" id="GO:0005524">
    <property type="term" value="F:ATP binding"/>
    <property type="evidence" value="ECO:0007669"/>
    <property type="project" value="InterPro"/>
</dbReference>
<dbReference type="GO" id="GO:0046872">
    <property type="term" value="F:metal ion binding"/>
    <property type="evidence" value="ECO:0007669"/>
    <property type="project" value="TreeGrafter"/>
</dbReference>
<dbReference type="GO" id="GO:0044183">
    <property type="term" value="F:protein folding chaperone"/>
    <property type="evidence" value="ECO:0007669"/>
    <property type="project" value="InterPro"/>
</dbReference>
<dbReference type="GO" id="GO:0051087">
    <property type="term" value="F:protein-folding chaperone binding"/>
    <property type="evidence" value="ECO:0007669"/>
    <property type="project" value="TreeGrafter"/>
</dbReference>
<dbReference type="GO" id="GO:0051082">
    <property type="term" value="F:unfolded protein binding"/>
    <property type="evidence" value="ECO:0007669"/>
    <property type="project" value="TreeGrafter"/>
</dbReference>
<dbReference type="GO" id="GO:0051085">
    <property type="term" value="P:chaperone cofactor-dependent protein refolding"/>
    <property type="evidence" value="ECO:0007669"/>
    <property type="project" value="TreeGrafter"/>
</dbReference>
<dbReference type="CDD" id="cd00320">
    <property type="entry name" value="cpn10"/>
    <property type="match status" value="1"/>
</dbReference>
<dbReference type="FunFam" id="2.30.33.40:FF:000001">
    <property type="entry name" value="10 kDa chaperonin"/>
    <property type="match status" value="1"/>
</dbReference>
<dbReference type="Gene3D" id="2.30.33.40">
    <property type="entry name" value="GroES chaperonin"/>
    <property type="match status" value="1"/>
</dbReference>
<dbReference type="HAMAP" id="MF_00580">
    <property type="entry name" value="CH10"/>
    <property type="match status" value="1"/>
</dbReference>
<dbReference type="InterPro" id="IPR020818">
    <property type="entry name" value="Chaperonin_GroES"/>
</dbReference>
<dbReference type="InterPro" id="IPR037124">
    <property type="entry name" value="Chaperonin_GroES_sf"/>
</dbReference>
<dbReference type="InterPro" id="IPR018369">
    <property type="entry name" value="Chaprnonin_Cpn10_CS"/>
</dbReference>
<dbReference type="InterPro" id="IPR011032">
    <property type="entry name" value="GroES-like_sf"/>
</dbReference>
<dbReference type="NCBIfam" id="NF001527">
    <property type="entry name" value="PRK00364.1-2"/>
    <property type="match status" value="1"/>
</dbReference>
<dbReference type="NCBIfam" id="NF001529">
    <property type="entry name" value="PRK00364.1-5"/>
    <property type="match status" value="1"/>
</dbReference>
<dbReference type="NCBIfam" id="NF001531">
    <property type="entry name" value="PRK00364.2-2"/>
    <property type="match status" value="1"/>
</dbReference>
<dbReference type="NCBIfam" id="NF001533">
    <property type="entry name" value="PRK00364.2-4"/>
    <property type="match status" value="1"/>
</dbReference>
<dbReference type="NCBIfam" id="NF001534">
    <property type="entry name" value="PRK00364.2-5"/>
    <property type="match status" value="1"/>
</dbReference>
<dbReference type="PANTHER" id="PTHR10772">
    <property type="entry name" value="10 KDA HEAT SHOCK PROTEIN"/>
    <property type="match status" value="1"/>
</dbReference>
<dbReference type="PANTHER" id="PTHR10772:SF58">
    <property type="entry name" value="CO-CHAPERONIN GROES"/>
    <property type="match status" value="1"/>
</dbReference>
<dbReference type="Pfam" id="PF00166">
    <property type="entry name" value="Cpn10"/>
    <property type="match status" value="1"/>
</dbReference>
<dbReference type="PRINTS" id="PR00297">
    <property type="entry name" value="CHAPERONIN10"/>
</dbReference>
<dbReference type="SMART" id="SM00883">
    <property type="entry name" value="Cpn10"/>
    <property type="match status" value="1"/>
</dbReference>
<dbReference type="SUPFAM" id="SSF50129">
    <property type="entry name" value="GroES-like"/>
    <property type="match status" value="1"/>
</dbReference>
<dbReference type="PROSITE" id="PS00681">
    <property type="entry name" value="CHAPERONINS_CPN10"/>
    <property type="match status" value="1"/>
</dbReference>
<organism>
    <name type="scientific">Nitratidesulfovibrio vulgaris (strain DP4)</name>
    <name type="common">Desulfovibrio vulgaris</name>
    <dbReference type="NCBI Taxonomy" id="391774"/>
    <lineage>
        <taxon>Bacteria</taxon>
        <taxon>Pseudomonadati</taxon>
        <taxon>Thermodesulfobacteriota</taxon>
        <taxon>Desulfovibrionia</taxon>
        <taxon>Desulfovibrionales</taxon>
        <taxon>Desulfovibrionaceae</taxon>
        <taxon>Nitratidesulfovibrio</taxon>
    </lineage>
</organism>